<evidence type="ECO:0000255" key="1">
    <source>
        <dbReference type="HAMAP-Rule" id="MF_00117"/>
    </source>
</evidence>
<proteinExistence type="inferred from homology"/>
<name>HSLO_YERPG</name>
<organism>
    <name type="scientific">Yersinia pestis bv. Antiqua (strain Angola)</name>
    <dbReference type="NCBI Taxonomy" id="349746"/>
    <lineage>
        <taxon>Bacteria</taxon>
        <taxon>Pseudomonadati</taxon>
        <taxon>Pseudomonadota</taxon>
        <taxon>Gammaproteobacteria</taxon>
        <taxon>Enterobacterales</taxon>
        <taxon>Yersiniaceae</taxon>
        <taxon>Yersinia</taxon>
    </lineage>
</organism>
<comment type="function">
    <text evidence="1">Redox regulated molecular chaperone. Protects both thermally unfolding and oxidatively damaged proteins from irreversible aggregation. Plays an important role in the bacterial defense system toward oxidative stress.</text>
</comment>
<comment type="subcellular location">
    <subcellularLocation>
        <location evidence="1">Cytoplasm</location>
    </subcellularLocation>
</comment>
<comment type="PTM">
    <text evidence="1">Under oxidizing conditions two disulfide bonds are formed involving the reactive cysteines. Under reducing conditions zinc is bound to the reactive cysteines and the protein is inactive.</text>
</comment>
<comment type="similarity">
    <text evidence="1">Belongs to the HSP33 family.</text>
</comment>
<accession>A9R4C1</accession>
<protein>
    <recommendedName>
        <fullName evidence="1">33 kDa chaperonin</fullName>
    </recommendedName>
    <alternativeName>
        <fullName evidence="1">Heat shock protein 33 homolog</fullName>
        <shortName evidence="1">HSP33</shortName>
    </alternativeName>
</protein>
<gene>
    <name evidence="1" type="primary">hslO</name>
    <name type="ordered locus">YpAngola_A3738</name>
</gene>
<feature type="chain" id="PRO_1000095043" description="33 kDa chaperonin">
    <location>
        <begin position="1"/>
        <end position="293"/>
    </location>
</feature>
<feature type="disulfide bond" description="Redox-active" evidence="1">
    <location>
        <begin position="231"/>
        <end position="233"/>
    </location>
</feature>
<feature type="disulfide bond" description="Redox-active" evidence="1">
    <location>
        <begin position="264"/>
        <end position="267"/>
    </location>
</feature>
<dbReference type="EMBL" id="CP000901">
    <property type="protein sequence ID" value="ABX88658.1"/>
    <property type="molecule type" value="Genomic_DNA"/>
</dbReference>
<dbReference type="RefSeq" id="WP_002208911.1">
    <property type="nucleotide sequence ID" value="NZ_CP009935.1"/>
</dbReference>
<dbReference type="SMR" id="A9R4C1"/>
<dbReference type="GeneID" id="57974461"/>
<dbReference type="KEGG" id="ypg:YpAngola_A3738"/>
<dbReference type="PATRIC" id="fig|349746.12.peg.444"/>
<dbReference type="GO" id="GO:0005737">
    <property type="term" value="C:cytoplasm"/>
    <property type="evidence" value="ECO:0007669"/>
    <property type="project" value="UniProtKB-SubCell"/>
</dbReference>
<dbReference type="GO" id="GO:0044183">
    <property type="term" value="F:protein folding chaperone"/>
    <property type="evidence" value="ECO:0007669"/>
    <property type="project" value="TreeGrafter"/>
</dbReference>
<dbReference type="GO" id="GO:0051082">
    <property type="term" value="F:unfolded protein binding"/>
    <property type="evidence" value="ECO:0007669"/>
    <property type="project" value="UniProtKB-UniRule"/>
</dbReference>
<dbReference type="GO" id="GO:0042026">
    <property type="term" value="P:protein refolding"/>
    <property type="evidence" value="ECO:0007669"/>
    <property type="project" value="TreeGrafter"/>
</dbReference>
<dbReference type="CDD" id="cd00498">
    <property type="entry name" value="Hsp33"/>
    <property type="match status" value="1"/>
</dbReference>
<dbReference type="Gene3D" id="1.10.287.480">
    <property type="entry name" value="helix hairpin bin"/>
    <property type="match status" value="1"/>
</dbReference>
<dbReference type="Gene3D" id="3.55.30.10">
    <property type="entry name" value="Hsp33 domain"/>
    <property type="match status" value="1"/>
</dbReference>
<dbReference type="Gene3D" id="3.90.1280.10">
    <property type="entry name" value="HSP33 redox switch-like"/>
    <property type="match status" value="1"/>
</dbReference>
<dbReference type="HAMAP" id="MF_00117">
    <property type="entry name" value="HslO"/>
    <property type="match status" value="1"/>
</dbReference>
<dbReference type="InterPro" id="IPR000397">
    <property type="entry name" value="Heat_shock_Hsp33"/>
</dbReference>
<dbReference type="InterPro" id="IPR016154">
    <property type="entry name" value="Heat_shock_Hsp33_C"/>
</dbReference>
<dbReference type="InterPro" id="IPR016153">
    <property type="entry name" value="Heat_shock_Hsp33_N"/>
</dbReference>
<dbReference type="InterPro" id="IPR023212">
    <property type="entry name" value="Hsp33_helix_hairpin_bin_dom_sf"/>
</dbReference>
<dbReference type="NCBIfam" id="NF001033">
    <property type="entry name" value="PRK00114.1"/>
    <property type="match status" value="1"/>
</dbReference>
<dbReference type="PANTHER" id="PTHR30111">
    <property type="entry name" value="33 KDA CHAPERONIN"/>
    <property type="match status" value="1"/>
</dbReference>
<dbReference type="PANTHER" id="PTHR30111:SF1">
    <property type="entry name" value="33 KDA CHAPERONIN"/>
    <property type="match status" value="1"/>
</dbReference>
<dbReference type="Pfam" id="PF01430">
    <property type="entry name" value="HSP33"/>
    <property type="match status" value="1"/>
</dbReference>
<dbReference type="PIRSF" id="PIRSF005261">
    <property type="entry name" value="Heat_shock_Hsp33"/>
    <property type="match status" value="1"/>
</dbReference>
<dbReference type="SUPFAM" id="SSF64397">
    <property type="entry name" value="Hsp33 domain"/>
    <property type="match status" value="1"/>
</dbReference>
<dbReference type="SUPFAM" id="SSF118352">
    <property type="entry name" value="HSP33 redox switch-like"/>
    <property type="match status" value="1"/>
</dbReference>
<reference key="1">
    <citation type="journal article" date="2010" name="J. Bacteriol.">
        <title>Genome sequence of the deep-rooted Yersinia pestis strain Angola reveals new insights into the evolution and pangenome of the plague bacterium.</title>
        <authorList>
            <person name="Eppinger M."/>
            <person name="Worsham P.L."/>
            <person name="Nikolich M.P."/>
            <person name="Riley D.R."/>
            <person name="Sebastian Y."/>
            <person name="Mou S."/>
            <person name="Achtman M."/>
            <person name="Lindler L.E."/>
            <person name="Ravel J."/>
        </authorList>
    </citation>
    <scope>NUCLEOTIDE SEQUENCE [LARGE SCALE GENOMIC DNA]</scope>
    <source>
        <strain>Angola</strain>
    </source>
</reference>
<sequence>MSNHDQLHRYLFANHAVRGELVSVNETYQQVLANHDYPPAVQKLLGEMLVATSLLTATLKFDGDITVQLQGGDGPLTLAVINGNNRQEMRGVARVKGEISDDSTLQEMVGNGYLVITITPAQGERYQGVVALEGETIAACLENYFMQSEQLPTRLFIRTGHVADKAAAGGMLLQVLPAQERNEDEFDHLAQLTATIKAEELFTLPANEVLYRLYHQEEVTLYEPQNVSFRCTCSRQRCADALVTLADDDVTEMLEQDGNIDMHCEYCGNHYLFDAVDIATLKNGNSASSEQIH</sequence>
<keyword id="KW-0143">Chaperone</keyword>
<keyword id="KW-0963">Cytoplasm</keyword>
<keyword id="KW-1015">Disulfide bond</keyword>
<keyword id="KW-0676">Redox-active center</keyword>
<keyword id="KW-0862">Zinc</keyword>